<organism>
    <name type="scientific">Saccharolobus solfataricus (strain ATCC 35092 / DSM 1617 / JCM 11322 / P2)</name>
    <name type="common">Sulfolobus solfataricus</name>
    <dbReference type="NCBI Taxonomy" id="273057"/>
    <lineage>
        <taxon>Archaea</taxon>
        <taxon>Thermoproteota</taxon>
        <taxon>Thermoprotei</taxon>
        <taxon>Sulfolobales</taxon>
        <taxon>Sulfolobaceae</taxon>
        <taxon>Saccharolobus</taxon>
    </lineage>
</organism>
<name>RRP41_SACS2</name>
<protein>
    <recommendedName>
        <fullName evidence="1">Exosome complex component Rrp41</fullName>
        <ecNumber evidence="1">3.1.13.-</ecNumber>
    </recommendedName>
</protein>
<accession>Q9UXC2</accession>
<dbReference type="EC" id="3.1.13.-" evidence="1"/>
<dbReference type="EMBL" id="Y18930">
    <property type="protein sequence ID" value="CAB57569.1"/>
    <property type="molecule type" value="Genomic_DNA"/>
</dbReference>
<dbReference type="EMBL" id="AE006641">
    <property type="protein sequence ID" value="AAK41031.1"/>
    <property type="molecule type" value="Genomic_DNA"/>
</dbReference>
<dbReference type="PIR" id="H90221">
    <property type="entry name" value="H90221"/>
</dbReference>
<dbReference type="PDB" id="2BR2">
    <property type="method" value="X-ray"/>
    <property type="resolution" value="2.80 A"/>
    <property type="chains" value="B/D/F/H/J/L/N/P/R/T/V/X=1-248"/>
</dbReference>
<dbReference type="PDB" id="2C37">
    <property type="method" value="X-ray"/>
    <property type="resolution" value="2.80 A"/>
    <property type="chains" value="B/D/F/H/J/L/N/P/R/T/V/X=1-248"/>
</dbReference>
<dbReference type="PDB" id="2C38">
    <property type="method" value="X-ray"/>
    <property type="resolution" value="3.10 A"/>
    <property type="chains" value="B/D/F/H/J/L/N/P/R/T/V/X=1-248"/>
</dbReference>
<dbReference type="PDB" id="2C39">
    <property type="method" value="X-ray"/>
    <property type="resolution" value="3.30 A"/>
    <property type="chains" value="B/D/F/H/J/L/N/P/R/T/V/X=1-248"/>
</dbReference>
<dbReference type="PDB" id="2JE6">
    <property type="method" value="X-ray"/>
    <property type="resolution" value="1.60 A"/>
    <property type="chains" value="B=1-248"/>
</dbReference>
<dbReference type="PDB" id="2JEA">
    <property type="method" value="X-ray"/>
    <property type="resolution" value="2.33 A"/>
    <property type="chains" value="B=1-248"/>
</dbReference>
<dbReference type="PDB" id="2JEB">
    <property type="method" value="X-ray"/>
    <property type="resolution" value="2.40 A"/>
    <property type="chains" value="B=1-248"/>
</dbReference>
<dbReference type="PDB" id="3L7Z">
    <property type="method" value="X-ray"/>
    <property type="resolution" value="2.41 A"/>
    <property type="chains" value="B/E/H=4-248"/>
</dbReference>
<dbReference type="PDB" id="4BA1">
    <property type="method" value="X-ray"/>
    <property type="resolution" value="1.80 A"/>
    <property type="chains" value="B=1-248"/>
</dbReference>
<dbReference type="PDB" id="4BA2">
    <property type="method" value="X-ray"/>
    <property type="resolution" value="2.50 A"/>
    <property type="chains" value="B=1-248"/>
</dbReference>
<dbReference type="PDBsum" id="2BR2"/>
<dbReference type="PDBsum" id="2C37"/>
<dbReference type="PDBsum" id="2C38"/>
<dbReference type="PDBsum" id="2C39"/>
<dbReference type="PDBsum" id="2JE6"/>
<dbReference type="PDBsum" id="2JEA"/>
<dbReference type="PDBsum" id="2JEB"/>
<dbReference type="PDBsum" id="3L7Z"/>
<dbReference type="PDBsum" id="4BA1"/>
<dbReference type="PDBsum" id="4BA2"/>
<dbReference type="SMR" id="Q9UXC2"/>
<dbReference type="DIP" id="DIP-58154N"/>
<dbReference type="FunCoup" id="Q9UXC2">
    <property type="interactions" value="195"/>
</dbReference>
<dbReference type="IntAct" id="Q9UXC2">
    <property type="interactions" value="2"/>
</dbReference>
<dbReference type="MINT" id="Q9UXC2"/>
<dbReference type="STRING" id="273057.SSO0735"/>
<dbReference type="PaxDb" id="273057-SSO0735"/>
<dbReference type="EnsemblBacteria" id="AAK41031">
    <property type="protein sequence ID" value="AAK41031"/>
    <property type="gene ID" value="SSO0735"/>
</dbReference>
<dbReference type="KEGG" id="sso:SSO0735"/>
<dbReference type="PATRIC" id="fig|273057.12.peg.731"/>
<dbReference type="eggNOG" id="arCOG01575">
    <property type="taxonomic scope" value="Archaea"/>
</dbReference>
<dbReference type="HOGENOM" id="CLU_063514_0_0_2"/>
<dbReference type="InParanoid" id="Q9UXC2"/>
<dbReference type="PhylomeDB" id="Q9UXC2"/>
<dbReference type="EvolutionaryTrace" id="Q9UXC2"/>
<dbReference type="Proteomes" id="UP000001974">
    <property type="component" value="Chromosome"/>
</dbReference>
<dbReference type="GO" id="GO:0000177">
    <property type="term" value="C:cytoplasmic exosome (RNase complex)"/>
    <property type="evidence" value="ECO:0000318"/>
    <property type="project" value="GO_Central"/>
</dbReference>
<dbReference type="GO" id="GO:0000175">
    <property type="term" value="F:3'-5'-RNA exonuclease activity"/>
    <property type="evidence" value="ECO:0007669"/>
    <property type="project" value="UniProtKB-UniRule"/>
</dbReference>
<dbReference type="GO" id="GO:0003723">
    <property type="term" value="F:RNA binding"/>
    <property type="evidence" value="ECO:0000318"/>
    <property type="project" value="GO_Central"/>
</dbReference>
<dbReference type="GO" id="GO:0010467">
    <property type="term" value="P:gene expression"/>
    <property type="evidence" value="ECO:0007669"/>
    <property type="project" value="UniProtKB-ARBA"/>
</dbReference>
<dbReference type="GO" id="GO:0016075">
    <property type="term" value="P:rRNA catabolic process"/>
    <property type="evidence" value="ECO:0000318"/>
    <property type="project" value="GO_Central"/>
</dbReference>
<dbReference type="CDD" id="cd11366">
    <property type="entry name" value="RNase_PH_archRRP41"/>
    <property type="match status" value="1"/>
</dbReference>
<dbReference type="FunFam" id="3.30.230.70:FF:000004">
    <property type="entry name" value="Exosome complex component Rrp41"/>
    <property type="match status" value="1"/>
</dbReference>
<dbReference type="Gene3D" id="3.30.230.70">
    <property type="entry name" value="GHMP Kinase, N-terminal domain"/>
    <property type="match status" value="1"/>
</dbReference>
<dbReference type="HAMAP" id="MF_00591">
    <property type="entry name" value="Exosome_Rrp41"/>
    <property type="match status" value="1"/>
</dbReference>
<dbReference type="InterPro" id="IPR001247">
    <property type="entry name" value="ExoRNase_PH_dom1"/>
</dbReference>
<dbReference type="InterPro" id="IPR015847">
    <property type="entry name" value="ExoRNase_PH_dom2"/>
</dbReference>
<dbReference type="InterPro" id="IPR036345">
    <property type="entry name" value="ExoRNase_PH_dom2_sf"/>
</dbReference>
<dbReference type="InterPro" id="IPR027408">
    <property type="entry name" value="PNPase/RNase_PH_dom_sf"/>
</dbReference>
<dbReference type="InterPro" id="IPR020568">
    <property type="entry name" value="Ribosomal_Su5_D2-typ_SF"/>
</dbReference>
<dbReference type="InterPro" id="IPR050080">
    <property type="entry name" value="RNase_PH"/>
</dbReference>
<dbReference type="InterPro" id="IPR011807">
    <property type="entry name" value="Rrp41"/>
</dbReference>
<dbReference type="NCBIfam" id="TIGR02065">
    <property type="entry name" value="ECX1"/>
    <property type="match status" value="1"/>
</dbReference>
<dbReference type="PANTHER" id="PTHR11953">
    <property type="entry name" value="EXOSOME COMPLEX COMPONENT"/>
    <property type="match status" value="1"/>
</dbReference>
<dbReference type="PANTHER" id="PTHR11953:SF0">
    <property type="entry name" value="EXOSOME COMPLEX COMPONENT RRP41"/>
    <property type="match status" value="1"/>
</dbReference>
<dbReference type="Pfam" id="PF01138">
    <property type="entry name" value="RNase_PH"/>
    <property type="match status" value="1"/>
</dbReference>
<dbReference type="Pfam" id="PF03725">
    <property type="entry name" value="RNase_PH_C"/>
    <property type="match status" value="1"/>
</dbReference>
<dbReference type="SUPFAM" id="SSF55666">
    <property type="entry name" value="Ribonuclease PH domain 2-like"/>
    <property type="match status" value="1"/>
</dbReference>
<dbReference type="SUPFAM" id="SSF54211">
    <property type="entry name" value="Ribosomal protein S5 domain 2-like"/>
    <property type="match status" value="1"/>
</dbReference>
<evidence type="ECO:0000255" key="1">
    <source>
        <dbReference type="HAMAP-Rule" id="MF_00591"/>
    </source>
</evidence>
<evidence type="ECO:0000269" key="2">
    <source>
    </source>
</evidence>
<evidence type="ECO:0000269" key="3">
    <source>
    </source>
</evidence>
<evidence type="ECO:0000269" key="4">
    <source>
    </source>
</evidence>
<evidence type="ECO:0000269" key="5">
    <source>
    </source>
</evidence>
<evidence type="ECO:0000269" key="6">
    <source>
    </source>
</evidence>
<evidence type="ECO:0000269" key="7">
    <source>
    </source>
</evidence>
<evidence type="ECO:0007829" key="8">
    <source>
        <dbReference type="PDB" id="2C39"/>
    </source>
</evidence>
<evidence type="ECO:0007829" key="9">
    <source>
        <dbReference type="PDB" id="2JE6"/>
    </source>
</evidence>
<feature type="chain" id="PRO_0000139991" description="Exosome complex component Rrp41">
    <location>
        <begin position="1"/>
        <end position="248"/>
    </location>
</feature>
<feature type="mutagenesis site" description="Abolishes exoribonuclease activity; when associated with E-99." evidence="3">
    <original>R</original>
    <variation>E</variation>
    <location>
        <position position="98"/>
    </location>
</feature>
<feature type="mutagenesis site" description="Abolishes exoribonuclease activity; when associated with E-98." evidence="3">
    <original>R</original>
    <variation>E</variation>
    <location>
        <position position="99"/>
    </location>
</feature>
<feature type="mutagenesis site" description="Abolishes both exoribonuclease and polyadenylation activities." evidence="2">
    <original>D</original>
    <variation>A</variation>
    <location>
        <position position="182"/>
    </location>
</feature>
<feature type="helix" evidence="8">
    <location>
        <begin position="2"/>
        <end position="4"/>
    </location>
</feature>
<feature type="strand" evidence="8">
    <location>
        <begin position="15"/>
        <end position="17"/>
    </location>
</feature>
<feature type="strand" evidence="9">
    <location>
        <begin position="31"/>
        <end position="36"/>
    </location>
</feature>
<feature type="strand" evidence="9">
    <location>
        <begin position="39"/>
        <end position="49"/>
    </location>
</feature>
<feature type="strand" evidence="9">
    <location>
        <begin position="52"/>
        <end position="63"/>
    </location>
</feature>
<feature type="helix" evidence="9">
    <location>
        <begin position="67"/>
        <end position="69"/>
    </location>
</feature>
<feature type="strand" evidence="9">
    <location>
        <begin position="72"/>
        <end position="74"/>
    </location>
</feature>
<feature type="strand" evidence="9">
    <location>
        <begin position="76"/>
        <end position="83"/>
    </location>
</feature>
<feature type="strand" evidence="9">
    <location>
        <begin position="87"/>
        <end position="90"/>
    </location>
</feature>
<feature type="helix" evidence="9">
    <location>
        <begin position="98"/>
        <end position="112"/>
    </location>
</feature>
<feature type="helix" evidence="9">
    <location>
        <begin position="117"/>
        <end position="119"/>
    </location>
</feature>
<feature type="strand" evidence="9">
    <location>
        <begin position="123"/>
        <end position="133"/>
    </location>
</feature>
<feature type="helix" evidence="9">
    <location>
        <begin position="138"/>
        <end position="152"/>
    </location>
</feature>
<feature type="strand" evidence="9">
    <location>
        <begin position="157"/>
        <end position="159"/>
    </location>
</feature>
<feature type="strand" evidence="9">
    <location>
        <begin position="162"/>
        <end position="169"/>
    </location>
</feature>
<feature type="strand" evidence="9">
    <location>
        <begin position="172"/>
        <end position="176"/>
    </location>
</feature>
<feature type="helix" evidence="9">
    <location>
        <begin position="179"/>
        <end position="184"/>
    </location>
</feature>
<feature type="strand" evidence="9">
    <location>
        <begin position="185"/>
        <end position="194"/>
    </location>
</feature>
<feature type="helix" evidence="9">
    <location>
        <begin position="195"/>
        <end position="197"/>
    </location>
</feature>
<feature type="strand" evidence="9">
    <location>
        <begin position="199"/>
        <end position="207"/>
    </location>
</feature>
<feature type="helix" evidence="9">
    <location>
        <begin position="211"/>
        <end position="237"/>
    </location>
</feature>
<feature type="helix" evidence="9">
    <location>
        <begin position="238"/>
        <end position="240"/>
    </location>
</feature>
<gene>
    <name evidence="1" type="primary">rrp41</name>
    <name type="ordered locus">SSO0735</name>
</gene>
<proteinExistence type="evidence at protein level"/>
<comment type="function">
    <text evidence="1 2 4 6">Catalytic component of the exosome, which is a complex involved in RNA degradation. Has 3'-&gt;5' exoribonuclease activity. Can also synthesize heteromeric RNA-tails. Binds RNA.</text>
</comment>
<comment type="subunit">
    <text evidence="1 2 3 4 5 6 7">Component of the archaeal exosome complex. Forms a hexameric ring-like arrangement composed of 3 Rrp41-Rrp42 heterodimers. The hexameric ring associates with a trimer of Rrp4 and/or Csl4 subunits.</text>
</comment>
<comment type="interaction">
    <interactant intactId="EBI-7981302">
        <id>Q9UXC2</id>
    </interactant>
    <interactant intactId="EBI-9009550">
        <id>Q9UXC0</id>
        <label>rrp42</label>
    </interactant>
    <organismsDiffer>false</organismsDiffer>
    <experiments>3</experiments>
</comment>
<comment type="subcellular location">
    <subcellularLocation>
        <location evidence="1">Cytoplasm</location>
    </subcellularLocation>
</comment>
<comment type="similarity">
    <text evidence="1">Belongs to the RNase PH family. Rrp41 subfamily.</text>
</comment>
<reference key="1">
    <citation type="journal article" date="2000" name="Genome">
        <title>Gene content and organization of a 281-kbp contig from the genome of the extremely thermophilic archaeon, Sulfolobus solfataricus P2.</title>
        <authorList>
            <person name="Charlebois R.L."/>
            <person name="Singh R.K."/>
            <person name="Chan-Weiher C.C.-Y."/>
            <person name="Allard G."/>
            <person name="Chow C."/>
            <person name="Confalonieri F."/>
            <person name="Curtis B."/>
            <person name="Duguet M."/>
            <person name="Erauso G."/>
            <person name="Faguy D."/>
            <person name="Gaasterland T."/>
            <person name="Garrett R.A."/>
            <person name="Gordon P."/>
            <person name="Jeffries A.C."/>
            <person name="Kozera C."/>
            <person name="Kushwaha N."/>
            <person name="Lafleur E."/>
            <person name="Medina N."/>
            <person name="Peng X."/>
            <person name="Penny S.L."/>
            <person name="She Q."/>
            <person name="St Jean A."/>
            <person name="van der Oost J."/>
            <person name="Young F."/>
            <person name="Zivanovic Y."/>
            <person name="Doolittle W.F."/>
            <person name="Ragan M.A."/>
            <person name="Sensen C.W."/>
        </authorList>
    </citation>
    <scope>NUCLEOTIDE SEQUENCE [LARGE SCALE GENOMIC DNA]</scope>
    <source>
        <strain>ATCC 35092 / DSM 1617 / JCM 11322 / P2</strain>
    </source>
</reference>
<reference key="2">
    <citation type="journal article" date="2001" name="Proc. Natl. Acad. Sci. U.S.A.">
        <title>The complete genome of the crenarchaeon Sulfolobus solfataricus P2.</title>
        <authorList>
            <person name="She Q."/>
            <person name="Singh R.K."/>
            <person name="Confalonieri F."/>
            <person name="Zivanovic Y."/>
            <person name="Allard G."/>
            <person name="Awayez M.J."/>
            <person name="Chan-Weiher C.C.-Y."/>
            <person name="Clausen I.G."/>
            <person name="Curtis B.A."/>
            <person name="De Moors A."/>
            <person name="Erauso G."/>
            <person name="Fletcher C."/>
            <person name="Gordon P.M.K."/>
            <person name="Heikamp-de Jong I."/>
            <person name="Jeffries A.C."/>
            <person name="Kozera C.J."/>
            <person name="Medina N."/>
            <person name="Peng X."/>
            <person name="Thi-Ngoc H.P."/>
            <person name="Redder P."/>
            <person name="Schenk M.E."/>
            <person name="Theriault C."/>
            <person name="Tolstrup N."/>
            <person name="Charlebois R.L."/>
            <person name="Doolittle W.F."/>
            <person name="Duguet M."/>
            <person name="Gaasterland T."/>
            <person name="Garrett R.A."/>
            <person name="Ragan M.A."/>
            <person name="Sensen C.W."/>
            <person name="Van der Oost J."/>
        </authorList>
    </citation>
    <scope>NUCLEOTIDE SEQUENCE [LARGE SCALE GENOMIC DNA]</scope>
    <source>
        <strain>ATCC 35092 / DSM 1617 / JCM 11322 / P2</strain>
    </source>
</reference>
<reference key="3">
    <citation type="journal article" date="2003" name="EMBO Rep.">
        <title>An exosome-like complex in Sulfolobus solfataricus.</title>
        <authorList>
            <person name="Evguenieva-Hackenberg E."/>
            <person name="Walter P."/>
            <person name="Hochleitner E."/>
            <person name="Lottspeich F."/>
            <person name="Klug G."/>
        </authorList>
    </citation>
    <scope>INTERACTION WITH EXOSOME</scope>
    <source>
        <strain>ATCC 35092 / DSM 1617 / JCM 11322 / P2</strain>
    </source>
</reference>
<reference key="4">
    <citation type="journal article" date="2006" name="Mol. Microbiol.">
        <title>Characterization of native and reconstituted exosome complexes from the hyperthermophilic archaeon Sulfolobus solfataricus.</title>
        <authorList>
            <person name="Walter P."/>
            <person name="Klein F."/>
            <person name="Lorentzen E."/>
            <person name="Ilchmann A."/>
            <person name="Klug G."/>
            <person name="Evguenieva-Hackenberg E."/>
        </authorList>
    </citation>
    <scope>INTERACTION WITH EXOSOME</scope>
</reference>
<reference key="5">
    <citation type="journal article" date="2010" name="FEBS Lett.">
        <title>The evolutionarily conserved subunits Rrp4 and Csl4 confer different substrate specificities to the archaeal exosome.</title>
        <authorList>
            <person name="Roppelt V."/>
            <person name="Klug G."/>
            <person name="Evguenieva-Hackenberg E."/>
        </authorList>
    </citation>
    <scope>FUNCTION</scope>
    <scope>SUBUNIT</scope>
</reference>
<reference key="6">
    <citation type="journal article" date="2012" name="Biochimie">
        <title>Heterogeneous complexes of the RNA exosome in Sulfolobus solfataricus.</title>
        <authorList>
            <person name="Witharana C."/>
            <person name="Roppelt V."/>
            <person name="Lochnit G."/>
            <person name="Klug G."/>
            <person name="Evguenieva-Hackenberg E."/>
        </authorList>
    </citation>
    <scope>INTERACTION WITH EXOSOME</scope>
    <source>
        <strain>ATCC 35092 / DSM 1617 / JCM 11322 / P2</strain>
    </source>
</reference>
<reference key="7">
    <citation type="journal article" date="2005" name="Mol. Cell">
        <title>Structural basis of 3' end RNA recognition and exoribonucleolytic cleavage by an exosome RNase PH core.</title>
        <authorList>
            <person name="Lorentzen E."/>
            <person name="Conti E."/>
        </authorList>
    </citation>
    <scope>X-RAY CRYSTALLOGRAPHY (2.80 ANGSTROMS) IN COMPLEX WITH RRP42</scope>
    <scope>SUBUNIT</scope>
    <scope>MUTAGENESIS OF ARG-98 AND ARG-99</scope>
</reference>
<reference key="8">
    <citation type="journal article" date="2005" name="Nat. Struct. Mol. Biol.">
        <title>The archaeal exosome core is a hexameric ring structure with three catalytic subunits.</title>
        <authorList>
            <person name="Lorentzen E."/>
            <person name="Walter P."/>
            <person name="Fribourg S."/>
            <person name="Evguenieva-Hackenberg E."/>
            <person name="Klug G."/>
            <person name="Conti E."/>
        </authorList>
    </citation>
    <scope>X-RAY CRYSTALLOGRAPHY (2.80 ANGSTROMS) IN COMPLEX WITH RRP42</scope>
    <scope>FUNCTION</scope>
    <scope>SUBUNIT</scope>
    <scope>MUTAGENESIS OF ASP-182</scope>
</reference>
<reference key="9">
    <citation type="journal article" date="2007" name="EMBO Rep.">
        <title>RNA channelling by the archaeal exosome.</title>
        <authorList>
            <person name="Lorentzen E."/>
            <person name="Dziembowski A."/>
            <person name="Lindner D."/>
            <person name="Seraphin B."/>
            <person name="Conti E."/>
        </authorList>
    </citation>
    <scope>X-RAY CRYSTALLOGRAPHY (1.60 ANGSTROMS) IN COMPLEX WITH RRP42 AND RRP4</scope>
    <scope>FUNCTION</scope>
    <scope>RNA-BINDING</scope>
    <scope>SUBUNIT</scope>
</reference>
<reference key="10">
    <citation type="journal article" date="2010" name="PLoS ONE">
        <title>Crystal structure of the S. solfataricus archaeal exosome reveals conformational flexibility in the RNA-binding ring.</title>
        <authorList>
            <person name="Lu C."/>
            <person name="Ding F."/>
            <person name="Ke A."/>
        </authorList>
    </citation>
    <scope>X-RAY CRYSTALLOGRAPHY (2.41 ANGSTROMS) OF 4-248 IN COMPLEX WITH RRP42 AND RRP4</scope>
</reference>
<reference key="11">
    <citation type="journal article" date="2012" name="Archaea">
        <title>Crystal structure of a 9-subunit archaeal exosome in pre-catalytic states of the phosphorolytic reaction.</title>
        <authorList>
            <person name="Lorentzen E."/>
            <person name="Conti E."/>
        </authorList>
    </citation>
    <scope>X-RAY CRYSTALLOGRAPHY (1.80 ANGSTROMS) OF MUTANT ALA-182 IN COMPLEX WITH RRP42 AND RRP4</scope>
    <scope>SUBUNIT</scope>
</reference>
<sequence length="248" mass="27578">MREMLQVERPKLILDDGKRTDGRKPDELRSIKIELGVLKNADGSAIFEMGNTKAIAAVYGPKEMHPRHLSLPDRAVLRVRYHMTPFSTDERKNPAPSRREIELSKVIREALESAVLVELFPRTAIDVFTEILQADAGSRLVSLMAASLALADAGIPMRDLIAGVAVGKADGVIILDLNETEDMWGEADMPIAMMPSLNQVTLFQLNGSMTPDEFRQAFDLAVKGINIIYNLEREALKSKYVEFKEEGV</sequence>
<keyword id="KW-0002">3D-structure</keyword>
<keyword id="KW-0963">Cytoplasm</keyword>
<keyword id="KW-0269">Exonuclease</keyword>
<keyword id="KW-0271">Exosome</keyword>
<keyword id="KW-0378">Hydrolase</keyword>
<keyword id="KW-0540">Nuclease</keyword>
<keyword id="KW-1185">Reference proteome</keyword>